<reference key="1">
    <citation type="journal article" date="1995" name="Science">
        <title>Inhibition of leaf senescence by autoregulated production of cytokinin.</title>
        <authorList>
            <person name="Gan S."/>
            <person name="Amasino R.M."/>
        </authorList>
    </citation>
    <scope>NUCLEOTIDE SEQUENCE [GENOMIC DNA]</scope>
    <source>
        <strain>cv. Landsberg erecta</strain>
        <tissue>Rosette leaf</tissue>
    </source>
</reference>
<reference key="2">
    <citation type="journal article" date="1998" name="DNA Res.">
        <title>Structural analysis of Arabidopsis thaliana chromosome 5. VIII. Sequence features of the regions of 1,081,958 bp covered by seventeen physically assigned P1 and TAC clones.</title>
        <authorList>
            <person name="Asamizu E."/>
            <person name="Sato S."/>
            <person name="Kaneko T."/>
            <person name="Nakamura Y."/>
            <person name="Kotani H."/>
            <person name="Miyajima N."/>
            <person name="Tabata S."/>
        </authorList>
    </citation>
    <scope>NUCLEOTIDE SEQUENCE [LARGE SCALE GENOMIC DNA]</scope>
    <source>
        <strain>cv. Columbia</strain>
    </source>
</reference>
<reference key="3">
    <citation type="journal article" date="2017" name="Plant J.">
        <title>Araport11: a complete reannotation of the Arabidopsis thaliana reference genome.</title>
        <authorList>
            <person name="Cheng C.Y."/>
            <person name="Krishnakumar V."/>
            <person name="Chan A.P."/>
            <person name="Thibaud-Nissen F."/>
            <person name="Schobel S."/>
            <person name="Town C.D."/>
        </authorList>
    </citation>
    <scope>GENOME REANNOTATION</scope>
    <source>
        <strain>cv. Columbia</strain>
    </source>
</reference>
<reference key="4">
    <citation type="journal article" date="2003" name="Science">
        <title>Empirical analysis of transcriptional activity in the Arabidopsis genome.</title>
        <authorList>
            <person name="Yamada K."/>
            <person name="Lim J."/>
            <person name="Dale J.M."/>
            <person name="Chen H."/>
            <person name="Shinn P."/>
            <person name="Palm C.J."/>
            <person name="Southwick A.M."/>
            <person name="Wu H.C."/>
            <person name="Kim C.J."/>
            <person name="Nguyen M."/>
            <person name="Pham P.K."/>
            <person name="Cheuk R.F."/>
            <person name="Karlin-Newmann G."/>
            <person name="Liu S.X."/>
            <person name="Lam B."/>
            <person name="Sakano H."/>
            <person name="Wu T."/>
            <person name="Yu G."/>
            <person name="Miranda M."/>
            <person name="Quach H.L."/>
            <person name="Tripp M."/>
            <person name="Chang C.H."/>
            <person name="Lee J.M."/>
            <person name="Toriumi M.J."/>
            <person name="Chan M.M."/>
            <person name="Tang C.C."/>
            <person name="Onodera C.S."/>
            <person name="Deng J.M."/>
            <person name="Akiyama K."/>
            <person name="Ansari Y."/>
            <person name="Arakawa T."/>
            <person name="Banh J."/>
            <person name="Banno F."/>
            <person name="Bowser L."/>
            <person name="Brooks S.Y."/>
            <person name="Carninci P."/>
            <person name="Chao Q."/>
            <person name="Choy N."/>
            <person name="Enju A."/>
            <person name="Goldsmith A.D."/>
            <person name="Gurjal M."/>
            <person name="Hansen N.F."/>
            <person name="Hayashizaki Y."/>
            <person name="Johnson-Hopson C."/>
            <person name="Hsuan V.W."/>
            <person name="Iida K."/>
            <person name="Karnes M."/>
            <person name="Khan S."/>
            <person name="Koesema E."/>
            <person name="Ishida J."/>
            <person name="Jiang P.X."/>
            <person name="Jones T."/>
            <person name="Kawai J."/>
            <person name="Kamiya A."/>
            <person name="Meyers C."/>
            <person name="Nakajima M."/>
            <person name="Narusaka M."/>
            <person name="Seki M."/>
            <person name="Sakurai T."/>
            <person name="Satou M."/>
            <person name="Tamse R."/>
            <person name="Vaysberg M."/>
            <person name="Wallender E.K."/>
            <person name="Wong C."/>
            <person name="Yamamura Y."/>
            <person name="Yuan S."/>
            <person name="Shinozaki K."/>
            <person name="Davis R.W."/>
            <person name="Theologis A."/>
            <person name="Ecker J.R."/>
        </authorList>
    </citation>
    <scope>NUCLEOTIDE SEQUENCE [LARGE SCALE MRNA]</scope>
    <source>
        <strain>cv. Columbia</strain>
    </source>
</reference>
<reference key="5">
    <citation type="submission" date="1998-08" db="EMBL/GenBank/DDBJ databases">
        <title>Signal peptide selection derived cDNAs from Arabidopsis thaliana leaves and guard cells.</title>
        <authorList>
            <person name="Stracke R."/>
            <person name="Palme K."/>
        </authorList>
    </citation>
    <scope>NUCLEOTIDE SEQUENCE [MRNA] OF 1-142</scope>
</reference>
<reference key="6">
    <citation type="journal article" date="1994" name="Physiol. Plantarum">
        <title>Molecular analysis of natural leaf senescence in Arabidopsis thaliana.</title>
        <authorList>
            <person name="Lohman K.N."/>
            <person name="Gan S."/>
            <person name="John M.C."/>
            <person name="Amasino R.M."/>
        </authorList>
    </citation>
    <scope>TISSUE SPECIFICITY</scope>
    <scope>DEVELOPMENTAL STAGE</scope>
</reference>
<reference key="7">
    <citation type="journal article" date="1998" name="Plant Mol. Biol.">
        <title>A comparison of the expression patterns of several senescence-associated genes in response to stress and hormone treatment.</title>
        <authorList>
            <person name="Weaver L.M."/>
            <person name="Gan S."/>
            <person name="Quirino B."/>
            <person name="Amasino R.M."/>
        </authorList>
    </citation>
    <scope>DEVELOPMENTAL STAGE</scope>
    <scope>INDUCTION BY ABSCISIC ACID</scope>
    <scope>BIOTECHNOLOGY</scope>
</reference>
<reference key="8">
    <citation type="journal article" date="1999" name="Plant Mol. Biol.">
        <title>Identification of a promoter region responsible for the senescence-specific expression of SAG12.</title>
        <authorList>
            <person name="Noh Y.S."/>
            <person name="Amasino R.M."/>
        </authorList>
    </citation>
    <scope>INDUCTION BY SENESCENCE</scope>
    <scope>DEVELOPMENTAL STAGE</scope>
    <scope>BIOTECHNOLOGY</scope>
    <scope>REGULATION BY CYTOKININ; AUXIN AND SUGARS</scope>
    <source>
        <strain>cv. Columbia</strain>
    </source>
</reference>
<reference key="9">
    <citation type="journal article" date="1999" name="Plant Mol. Biol.">
        <title>Markers for hypersensitive response and senescence show distinct patterns of expression.</title>
        <authorList>
            <person name="Pontier D."/>
            <person name="Gan S."/>
            <person name="Amasino R.M."/>
            <person name="Roby D."/>
            <person name="Lam E."/>
        </authorList>
    </citation>
    <scope>INDUCTION BY COPPER; PROGRAMMED CELL DEATH AND HYPERSENSITIVE RESPONSE</scope>
</reference>
<reference key="10">
    <citation type="journal article" date="2000" name="Plant J.">
        <title>Salicylic acid has a role in regulating gene expression during leaf senescence.</title>
        <authorList>
            <person name="Morris K."/>
            <person name="MacKerness S.A."/>
            <person name="Page T."/>
            <person name="John C.F."/>
            <person name="Murphy A.M."/>
            <person name="Carr J.P."/>
            <person name="Buchanan-Wollaston V."/>
        </authorList>
    </citation>
    <scope>INDUCTION BY SENESCENCE</scope>
    <source>
        <strain>cv. Columbia</strain>
    </source>
</reference>
<reference key="11">
    <citation type="journal article" date="2001" name="J. Exp. Bot.">
        <title>Ultraviolet-B exposure leads to up-regulation of senescence-associated genes in Arabidopsis thaliana.</title>
        <authorList>
            <person name="John C.F."/>
            <person name="Morris K."/>
            <person name="Jordan B.R."/>
            <person name="Thomas B."/>
            <person name="A-H-Mackerness S."/>
        </authorList>
    </citation>
    <scope>INDUCTION BY UV-B</scope>
    <source>
        <strain>cv. Columbia</strain>
    </source>
</reference>
<reference key="12">
    <citation type="journal article" date="2005" name="Plant J.">
        <title>Senescence-associated vacuoles with intense proteolytic activity develop in leaves of Arabidopsis and soybean.</title>
        <authorList>
            <person name="Otegui M.S."/>
            <person name="Noh Y.-S."/>
            <person name="Martinez D.E."/>
            <person name="Vila Petroff M.G."/>
            <person name="Staehelin L.A."/>
            <person name="Amasino R.M."/>
            <person name="Guiamet J.J."/>
        </authorList>
    </citation>
    <scope>DISRUPTION PHENOTYPE</scope>
    <scope>SUBCELLULAR LOCATION</scope>
    <scope>TISSUE SPECIFICITY</scope>
</reference>
<reference key="13">
    <citation type="journal article" date="2008" name="J. Exp. Bot.">
        <title>HDA6 is required for jasmonate response, senescence and flowering in Arabidopsis.</title>
        <authorList>
            <person name="Wu K."/>
            <person name="Zhang L."/>
            <person name="Zhou C."/>
            <person name="Yu C.W."/>
            <person name="Chaikam V."/>
        </authorList>
    </citation>
    <scope>INDUCTION BY HISTONE H3 DEACETYLATION</scope>
</reference>
<reference key="14">
    <citation type="journal article" date="2008" name="Plant Biol.">
        <title>Natural developmental variations in leaf and plant senescence in Arabidopsis thaliana.</title>
        <authorList>
            <person name="Balazadeh S."/>
            <person name="Parlitz S."/>
            <person name="Mueller-Roeber B."/>
            <person name="Meyer R.C."/>
        </authorList>
    </citation>
    <scope>INDUCTION BY SENESCENCE</scope>
</reference>
<reference key="15">
    <citation type="journal article" date="2009" name="Plant J.">
        <title>Epigenetic programming via histone methylation at WRKY53 controls leaf senescence in Arabidopsis thaliana.</title>
        <authorList>
            <person name="Ay N."/>
            <person name="Irmler K."/>
            <person name="Fischer A."/>
            <person name="Uhlemann R."/>
            <person name="Reuter G."/>
            <person name="Humbeck K."/>
        </authorList>
    </citation>
    <scope>INDUCTION BY WRKY53</scope>
</reference>
<reference key="16">
    <citation type="journal article" date="2009" name="Plant Physiol.">
        <title>Nitric oxide is involved in cadmium-induced programmed cell death in Arabidopsis suspension cultures.</title>
        <authorList>
            <person name="De Michele R."/>
            <person name="Vurro E."/>
            <person name="Rigo C."/>
            <person name="Costa A."/>
            <person name="Elviri L."/>
            <person name="Di Valentin M."/>
            <person name="Careri M."/>
            <person name="Zottini M."/>
            <person name="Sanita di Toppi L."/>
            <person name="Lo Schiavo F."/>
        </authorList>
    </citation>
    <scope>INDUCTION BY CADMIUM</scope>
</reference>
<reference key="17">
    <citation type="journal article" date="2011" name="BMC Plant Biol.">
        <title>Ethylene is involved in pistil fate by modulating the onset of ovule senescence and the GA-mediated fruit set in Arabidopsis.</title>
        <authorList>
            <person name="Carbonell-Bejerano P."/>
            <person name="Urbez C."/>
            <person name="Granell A."/>
            <person name="Carbonell J."/>
            <person name="Perez-Amador M.A."/>
        </authorList>
    </citation>
    <scope>TISSUE SPECIFICITY</scope>
    <scope>DEVELOPMENTAL STAGE</scope>
    <source>
        <strain>cv. Columbia</strain>
    </source>
</reference>
<evidence type="ECO:0000250" key="1">
    <source>
        <dbReference type="UniProtKB" id="P07858"/>
    </source>
</evidence>
<evidence type="ECO:0000250" key="2">
    <source>
        <dbReference type="UniProtKB" id="P25250"/>
    </source>
</evidence>
<evidence type="ECO:0000250" key="3">
    <source>
        <dbReference type="UniProtKB" id="P80884"/>
    </source>
</evidence>
<evidence type="ECO:0000255" key="4"/>
<evidence type="ECO:0000255" key="5">
    <source>
        <dbReference type="PROSITE-ProRule" id="PRU00498"/>
    </source>
</evidence>
<evidence type="ECO:0000255" key="6">
    <source>
        <dbReference type="PROSITE-ProRule" id="PRU10088"/>
    </source>
</evidence>
<evidence type="ECO:0000255" key="7">
    <source>
        <dbReference type="PROSITE-ProRule" id="PRU10089"/>
    </source>
</evidence>
<evidence type="ECO:0000255" key="8">
    <source>
        <dbReference type="PROSITE-ProRule" id="PRU10090"/>
    </source>
</evidence>
<evidence type="ECO:0000269" key="9">
    <source>
    </source>
</evidence>
<evidence type="ECO:0000269" key="10">
    <source>
    </source>
</evidence>
<evidence type="ECO:0000269" key="11">
    <source>
    </source>
</evidence>
<evidence type="ECO:0000269" key="12">
    <source>
    </source>
</evidence>
<evidence type="ECO:0000269" key="13">
    <source>
    </source>
</evidence>
<evidence type="ECO:0000269" key="14">
    <source>
    </source>
</evidence>
<evidence type="ECO:0000269" key="15">
    <source>
    </source>
</evidence>
<evidence type="ECO:0000269" key="16">
    <source>
    </source>
</evidence>
<evidence type="ECO:0000269" key="17">
    <source>
    </source>
</evidence>
<evidence type="ECO:0000269" key="18">
    <source>
    </source>
</evidence>
<evidence type="ECO:0000269" key="19">
    <source>
    </source>
</evidence>
<evidence type="ECO:0000269" key="20">
    <source ref="6"/>
</evidence>
<evidence type="ECO:0000303" key="21">
    <source ref="6"/>
</evidence>
<evidence type="ECO:0000305" key="22"/>
<evidence type="ECO:0000305" key="23">
    <source>
    </source>
</evidence>
<evidence type="ECO:0000305" key="24">
    <source>
    </source>
</evidence>
<evidence type="ECO:0000305" key="25">
    <source>
    </source>
</evidence>
<evidence type="ECO:0000305" key="26">
    <source>
    </source>
</evidence>
<evidence type="ECO:0000305" key="27">
    <source>
    </source>
</evidence>
<evidence type="ECO:0000305" key="28">
    <source>
    </source>
</evidence>
<evidence type="ECO:0000312" key="29">
    <source>
        <dbReference type="Araport" id="AT5G45890"/>
    </source>
</evidence>
<evidence type="ECO:0000312" key="30">
    <source>
        <dbReference type="EMBL" id="BAB09317.1"/>
    </source>
</evidence>
<sequence>MALKHMQIFLFVAIFSSFCFSITLSRPLDNELIMQKRHIEWMTKHGRVYADVKEENNRYVVFKNNVERIEHLNSIPAGRTFKLAVNQFADLTNDEFRSMYTGFKGVSALSSQSQTKMSPFRYQNVSSGALPVSVDWRKKGAVTPIKNQGSCGCCWAFSAVAAIEGATQIKKGKLISLSEQQLVDCDTNDFGCEGGLMDTAFEHIKATGGLTTESNYPYKGEDATCNSKKTNPKATSITGYEDVPVNDEQALMKAVAHQPVSVGIEGGGFDFQFYSSGVFTGECTTYLDHAVTAIGYGESTNGSKYWIIKNSWGTKWGESGYMRIQKDVKDKQGLCGLAMKASYPTI</sequence>
<proteinExistence type="evidence at protein level"/>
<dbReference type="EC" id="3.4.22.-" evidence="3"/>
<dbReference type="EMBL" id="U37336">
    <property type="protein sequence ID" value="AAC49135.1"/>
    <property type="molecule type" value="Genomic_DNA"/>
</dbReference>
<dbReference type="EMBL" id="AB016870">
    <property type="protein sequence ID" value="BAB09317.1"/>
    <property type="molecule type" value="Genomic_DNA"/>
</dbReference>
<dbReference type="EMBL" id="CP002688">
    <property type="protein sequence ID" value="AED95312.1"/>
    <property type="molecule type" value="Genomic_DNA"/>
</dbReference>
<dbReference type="EMBL" id="AF370131">
    <property type="protein sequence ID" value="AAK43946.1"/>
    <property type="molecule type" value="mRNA"/>
</dbReference>
<dbReference type="EMBL" id="AY040073">
    <property type="protein sequence ID" value="AAK64131.1"/>
    <property type="molecule type" value="mRNA"/>
</dbReference>
<dbReference type="EMBL" id="AF083753">
    <property type="protein sequence ID" value="AAN60311.1"/>
    <property type="molecule type" value="mRNA"/>
</dbReference>
<dbReference type="RefSeq" id="NP_568651.1">
    <property type="nucleotide sequence ID" value="NM_123957.3"/>
</dbReference>
<dbReference type="SMR" id="Q9FJ47"/>
<dbReference type="BioGRID" id="19878">
    <property type="interactions" value="1"/>
</dbReference>
<dbReference type="FunCoup" id="Q9FJ47">
    <property type="interactions" value="272"/>
</dbReference>
<dbReference type="IntAct" id="Q9FJ47">
    <property type="interactions" value="1"/>
</dbReference>
<dbReference type="STRING" id="3702.Q9FJ47"/>
<dbReference type="MEROPS" id="C01.117"/>
<dbReference type="GlyCosmos" id="Q9FJ47">
    <property type="glycosylation" value="2 sites, No reported glycans"/>
</dbReference>
<dbReference type="GlyGen" id="Q9FJ47">
    <property type="glycosylation" value="2 sites"/>
</dbReference>
<dbReference type="PaxDb" id="3702-AT5G45890.1"/>
<dbReference type="ProMEX" id="Q9FJ47"/>
<dbReference type="ProteomicsDB" id="232834"/>
<dbReference type="EnsemblPlants" id="AT5G45890.1">
    <property type="protein sequence ID" value="AT5G45890.1"/>
    <property type="gene ID" value="AT5G45890"/>
</dbReference>
<dbReference type="GeneID" id="834629"/>
<dbReference type="Gramene" id="AT5G45890.1">
    <property type="protein sequence ID" value="AT5G45890.1"/>
    <property type="gene ID" value="AT5G45890"/>
</dbReference>
<dbReference type="KEGG" id="ath:AT5G45890"/>
<dbReference type="Araport" id="AT5G45890"/>
<dbReference type="TAIR" id="AT5G45890">
    <property type="gene designation" value="SAG12"/>
</dbReference>
<dbReference type="eggNOG" id="KOG1543">
    <property type="taxonomic scope" value="Eukaryota"/>
</dbReference>
<dbReference type="HOGENOM" id="CLU_012184_1_0_1"/>
<dbReference type="InParanoid" id="Q9FJ47"/>
<dbReference type="OMA" id="GCLGAFN"/>
<dbReference type="OrthoDB" id="10253408at2759"/>
<dbReference type="PhylomeDB" id="Q9FJ47"/>
<dbReference type="PRO" id="PR:Q9FJ47"/>
<dbReference type="Proteomes" id="UP000006548">
    <property type="component" value="Chromosome 5"/>
</dbReference>
<dbReference type="ExpressionAtlas" id="Q9FJ47">
    <property type="expression patterns" value="baseline and differential"/>
</dbReference>
<dbReference type="GO" id="GO:0010282">
    <property type="term" value="C:senescence-associated vacuole"/>
    <property type="evidence" value="ECO:0000314"/>
    <property type="project" value="TAIR"/>
</dbReference>
<dbReference type="GO" id="GO:0008234">
    <property type="term" value="F:cysteine-type peptidase activity"/>
    <property type="evidence" value="ECO:0007669"/>
    <property type="project" value="UniProtKB-KW"/>
</dbReference>
<dbReference type="GO" id="GO:0050832">
    <property type="term" value="P:defense response to fungus"/>
    <property type="evidence" value="ECO:0000270"/>
    <property type="project" value="TAIR"/>
</dbReference>
<dbReference type="GO" id="GO:0080187">
    <property type="term" value="P:floral organ senescence"/>
    <property type="evidence" value="ECO:0000270"/>
    <property type="project" value="UniProtKB"/>
</dbReference>
<dbReference type="GO" id="GO:0010150">
    <property type="term" value="P:leaf senescence"/>
    <property type="evidence" value="ECO:0000270"/>
    <property type="project" value="UniProtKB"/>
</dbReference>
<dbReference type="GO" id="GO:0009626">
    <property type="term" value="P:plant-type hypersensitive response"/>
    <property type="evidence" value="ECO:0000270"/>
    <property type="project" value="UniProtKB"/>
</dbReference>
<dbReference type="GO" id="GO:0010623">
    <property type="term" value="P:programmed cell death involved in cell development"/>
    <property type="evidence" value="ECO:0000270"/>
    <property type="project" value="UniProtKB"/>
</dbReference>
<dbReference type="GO" id="GO:0006508">
    <property type="term" value="P:proteolysis"/>
    <property type="evidence" value="ECO:0007669"/>
    <property type="project" value="UniProtKB-KW"/>
</dbReference>
<dbReference type="GO" id="GO:0009733">
    <property type="term" value="P:response to auxin"/>
    <property type="evidence" value="ECO:0000270"/>
    <property type="project" value="UniProtKB"/>
</dbReference>
<dbReference type="GO" id="GO:0009735">
    <property type="term" value="P:response to cytokinin"/>
    <property type="evidence" value="ECO:0000270"/>
    <property type="project" value="UniProtKB"/>
</dbReference>
<dbReference type="GO" id="GO:0009750">
    <property type="term" value="P:response to fructose"/>
    <property type="evidence" value="ECO:0000270"/>
    <property type="project" value="UniProtKB"/>
</dbReference>
<dbReference type="GO" id="GO:0009749">
    <property type="term" value="P:response to glucose"/>
    <property type="evidence" value="ECO:0000270"/>
    <property type="project" value="UniProtKB"/>
</dbReference>
<dbReference type="GO" id="GO:0009744">
    <property type="term" value="P:response to sucrose"/>
    <property type="evidence" value="ECO:0000270"/>
    <property type="project" value="UniProtKB"/>
</dbReference>
<dbReference type="GO" id="GO:0010224">
    <property type="term" value="P:response to UV-B"/>
    <property type="evidence" value="ECO:0000270"/>
    <property type="project" value="UniProtKB"/>
</dbReference>
<dbReference type="GO" id="GO:1990169">
    <property type="term" value="P:stress response to copper ion"/>
    <property type="evidence" value="ECO:0000270"/>
    <property type="project" value="UniProtKB"/>
</dbReference>
<dbReference type="CDD" id="cd02248">
    <property type="entry name" value="Peptidase_C1A"/>
    <property type="match status" value="1"/>
</dbReference>
<dbReference type="FunFam" id="3.90.70.10:FF:000067">
    <property type="entry name" value="Senescence-specific cysteine protease"/>
    <property type="match status" value="1"/>
</dbReference>
<dbReference type="Gene3D" id="3.90.70.10">
    <property type="entry name" value="Cysteine proteinases"/>
    <property type="match status" value="1"/>
</dbReference>
<dbReference type="InterPro" id="IPR038765">
    <property type="entry name" value="Papain-like_cys_pep_sf"/>
</dbReference>
<dbReference type="InterPro" id="IPR025661">
    <property type="entry name" value="Pept_asp_AS"/>
</dbReference>
<dbReference type="InterPro" id="IPR000169">
    <property type="entry name" value="Pept_cys_AS"/>
</dbReference>
<dbReference type="InterPro" id="IPR025660">
    <property type="entry name" value="Pept_his_AS"/>
</dbReference>
<dbReference type="InterPro" id="IPR013128">
    <property type="entry name" value="Peptidase_C1A"/>
</dbReference>
<dbReference type="InterPro" id="IPR000668">
    <property type="entry name" value="Peptidase_C1A_C"/>
</dbReference>
<dbReference type="InterPro" id="IPR039417">
    <property type="entry name" value="Peptidase_C1A_papain-like"/>
</dbReference>
<dbReference type="InterPro" id="IPR013201">
    <property type="entry name" value="Prot_inhib_I29"/>
</dbReference>
<dbReference type="PANTHER" id="PTHR12411">
    <property type="entry name" value="CYSTEINE PROTEASE FAMILY C1-RELATED"/>
    <property type="match status" value="1"/>
</dbReference>
<dbReference type="Pfam" id="PF08246">
    <property type="entry name" value="Inhibitor_I29"/>
    <property type="match status" value="1"/>
</dbReference>
<dbReference type="Pfam" id="PF00112">
    <property type="entry name" value="Peptidase_C1"/>
    <property type="match status" value="1"/>
</dbReference>
<dbReference type="PRINTS" id="PR00705">
    <property type="entry name" value="PAPAIN"/>
</dbReference>
<dbReference type="SMART" id="SM00848">
    <property type="entry name" value="Inhibitor_I29"/>
    <property type="match status" value="1"/>
</dbReference>
<dbReference type="SMART" id="SM00645">
    <property type="entry name" value="Pept_C1"/>
    <property type="match status" value="1"/>
</dbReference>
<dbReference type="SUPFAM" id="SSF54001">
    <property type="entry name" value="Cysteine proteinases"/>
    <property type="match status" value="1"/>
</dbReference>
<dbReference type="PROSITE" id="PS00640">
    <property type="entry name" value="THIOL_PROTEASE_ASN"/>
    <property type="match status" value="1"/>
</dbReference>
<dbReference type="PROSITE" id="PS00139">
    <property type="entry name" value="THIOL_PROTEASE_CYS"/>
    <property type="match status" value="1"/>
</dbReference>
<dbReference type="PROSITE" id="PS00639">
    <property type="entry name" value="THIOL_PROTEASE_HIS"/>
    <property type="match status" value="1"/>
</dbReference>
<name>SAG12_ARATH</name>
<protein>
    <recommendedName>
        <fullName evidence="22">Senescence-specific cysteine protease SAG12</fullName>
        <ecNumber evidence="3">3.4.22.-</ecNumber>
    </recommendedName>
    <alternativeName>
        <fullName evidence="22">Cysteine proteinase SAG12</fullName>
    </alternativeName>
    <alternativeName>
        <fullName evidence="21">Protein SENESCENCE-ASSOCIATED GENE 12</fullName>
    </alternativeName>
</protein>
<feature type="signal peptide" evidence="4">
    <location>
        <begin position="1"/>
        <end position="25"/>
    </location>
</feature>
<feature type="chain" id="PRO_0000430524" description="Senescence-specific cysteine protease SAG12" evidence="4">
    <location>
        <begin position="26"/>
        <end position="346"/>
    </location>
</feature>
<feature type="active site" evidence="6">
    <location>
        <position position="154"/>
    </location>
</feature>
<feature type="active site" evidence="7">
    <location>
        <position position="289"/>
    </location>
</feature>
<feature type="active site" evidence="8">
    <location>
        <position position="310"/>
    </location>
</feature>
<feature type="glycosylation site" description="N-linked (GlcNAc...) asparagine" evidence="5">
    <location>
        <position position="124"/>
    </location>
</feature>
<feature type="glycosylation site" description="N-linked (GlcNAc...) asparagine" evidence="5">
    <location>
        <position position="301"/>
    </location>
</feature>
<feature type="disulfide bond" evidence="1">
    <location>
        <begin position="151"/>
        <end position="192"/>
    </location>
</feature>
<feature type="disulfide bond" evidence="2">
    <location>
        <begin position="185"/>
        <end position="225"/>
    </location>
</feature>
<feature type="disulfide bond" evidence="2">
    <location>
        <begin position="283"/>
        <end position="335"/>
    </location>
</feature>
<feature type="sequence conflict" description="In Ref. 1; AAC49135." ref="1">
    <original>R</original>
    <variation>C</variation>
    <location>
        <position position="97"/>
    </location>
</feature>
<feature type="sequence conflict" description="In Ref. 1; AAC49135." ref="1">
    <original>N</original>
    <variation>D</variation>
    <location>
        <position position="215"/>
    </location>
</feature>
<comment type="function">
    <text evidence="23 24 25 26 27 28">Cysteine protease that may have a developmental senescence specific cell death function during apoptosis, heavy metal detoxification, and hypersensitive response.</text>
</comment>
<comment type="subcellular location">
    <subcellularLocation>
        <location evidence="13">Vacuole</location>
    </subcellularLocation>
    <text evidence="13">Localized in senescence-associated vacuoles (SAVs) with intense proteolytic activity that develop in the peripheral cytoplasm of mesophyll and guard cells.</text>
</comment>
<comment type="tissue specificity">
    <text evidence="13 18 20">Found in senescent leaves, especially in senescence-associated vacuoles- (SAVs) containing cells (e.g. mesophyll and guard cells), and in senescencing ovules of unfertilised pistils.</text>
</comment>
<comment type="developmental stage">
    <text evidence="10 18 19 20">Senescent tissues specific expression (PubMed:10579486, Ref.6). Detected only after significant visible yellowing (PubMed:9617813). In unfertilised pistils, accumulates transiently shortly after anthesis, and increased again at the end of pistil development (PubMed:21575215). In ovules, first observed at the basal zone of the ovary, and progressively extend acropetally along the ovary (PubMed:21575215).</text>
</comment>
<comment type="induction">
    <text evidence="9 10 11 12 14 15 16 17 19">Expression activated by developmentally controlled senescence pathways leading to programmed cell death (PCD), probably by epigenetic regulation via histone H3 deacetylation and by WRKY53 activation (PubMed:10380810, PubMed:10579486, PubMed:18212027, PubMed:18721318, PubMed:19143996). Strongly up-regulated upon abscisic acid treatment (PubMed:9617813). Repressed by cytokinin, auxin (IAA), and sugars (sucrose, glucose and fructose) which can thus repress developmental senescence (PubMed:10579486). The senescence-associated accumulation is salicylic acid- (SA) dependent (PubMed:10972893). Induced slightly in outer leaves by UV-B exposure (PubMed:11432956). Expressed in late stages of heavy-metal- (e.g. copper) and hypersensitive response- (HR) mediated lesions, in chlorotic tissues surrounding the necrosis (PubMed:10380810). The induction by cadmium is nitric oxyde- (NO) dependent and occurs one day before cell death (PubMed:19261736).</text>
</comment>
<comment type="disruption phenotype">
    <text evidence="13">No visible effect on senescence.</text>
</comment>
<comment type="biotechnology">
    <text evidence="10 19">Good molecular marker for age-induced senescence onset measurement.</text>
</comment>
<comment type="similarity">
    <text evidence="6 7 8">Belongs to the peptidase C1 family.</text>
</comment>
<accession>Q9FJ47</accession>
<accession>Q38886</accession>
<accession>Q8H7B7</accession>
<organism>
    <name type="scientific">Arabidopsis thaliana</name>
    <name type="common">Mouse-ear cress</name>
    <dbReference type="NCBI Taxonomy" id="3702"/>
    <lineage>
        <taxon>Eukaryota</taxon>
        <taxon>Viridiplantae</taxon>
        <taxon>Streptophyta</taxon>
        <taxon>Embryophyta</taxon>
        <taxon>Tracheophyta</taxon>
        <taxon>Spermatophyta</taxon>
        <taxon>Magnoliopsida</taxon>
        <taxon>eudicotyledons</taxon>
        <taxon>Gunneridae</taxon>
        <taxon>Pentapetalae</taxon>
        <taxon>rosids</taxon>
        <taxon>malvids</taxon>
        <taxon>Brassicales</taxon>
        <taxon>Brassicaceae</taxon>
        <taxon>Camelineae</taxon>
        <taxon>Arabidopsis</taxon>
    </lineage>
</organism>
<keyword id="KW-0053">Apoptosis</keyword>
<keyword id="KW-1015">Disulfide bond</keyword>
<keyword id="KW-0325">Glycoprotein</keyword>
<keyword id="KW-0378">Hydrolase</keyword>
<keyword id="KW-0381">Hypersensitive response</keyword>
<keyword id="KW-0611">Plant defense</keyword>
<keyword id="KW-0645">Protease</keyword>
<keyword id="KW-1185">Reference proteome</keyword>
<keyword id="KW-0732">Signal</keyword>
<keyword id="KW-0788">Thiol protease</keyword>
<keyword id="KW-0926">Vacuole</keyword>
<gene>
    <name evidence="21" type="primary">SAG12</name>
    <name evidence="29" type="ordered locus">At5g45890</name>
    <name evidence="30" type="ORF">K15I22.9</name>
</gene>